<comment type="function">
    <text evidence="1">Transfers an acetyl group from acetyl-CoA to L-homoserine, forming acetyl-L-homoserine.</text>
</comment>
<comment type="catalytic activity">
    <reaction evidence="1">
        <text>L-homoserine + acetyl-CoA = O-acetyl-L-homoserine + CoA</text>
        <dbReference type="Rhea" id="RHEA:13701"/>
        <dbReference type="ChEBI" id="CHEBI:57287"/>
        <dbReference type="ChEBI" id="CHEBI:57288"/>
        <dbReference type="ChEBI" id="CHEBI:57476"/>
        <dbReference type="ChEBI" id="CHEBI:57716"/>
        <dbReference type="EC" id="2.3.1.31"/>
    </reaction>
</comment>
<comment type="pathway">
    <text evidence="1">Amino-acid biosynthesis; L-methionine biosynthesis via de novo pathway; O-acetyl-L-homoserine from L-homoserine: step 1/1.</text>
</comment>
<comment type="subcellular location">
    <subcellularLocation>
        <location evidence="1">Cytoplasm</location>
    </subcellularLocation>
</comment>
<comment type="similarity">
    <text evidence="1">Belongs to the MetA family.</text>
</comment>
<protein>
    <recommendedName>
        <fullName evidence="1">Homoserine O-acetyltransferase</fullName>
        <shortName evidence="1">HAT</shortName>
        <ecNumber evidence="1">2.3.1.31</ecNumber>
    </recommendedName>
    <alternativeName>
        <fullName evidence="1">Homoserine transacetylase</fullName>
        <shortName evidence="1">HTA</shortName>
    </alternativeName>
</protein>
<gene>
    <name evidence="1" type="primary">metAA</name>
    <name type="ordered locus">BCAH820_5500</name>
</gene>
<sequence>MPIIIDKDLPARKVLQEENIFVMTKERAETQDIRALKIAILNLMPTKQETEAQLLRLIGNTPLQLDVHLLHMESHLSRNVAQEHLTSFYKTFRDIENEKFDGLIITGAPVETLSFEEVDYWEELKRIMEYSKTNVTSTLHICWGAQAGLYYHYGVPKYPLKEKMFGVFEHEVREQHVKLLQGFDELFFAPHSRHTEVRENDIRGVKELTLLANSEEAGVHLVIGPEGRQVFALGHSEYSCDTLKQEYERDRQKGLNIDVPKNYFKHNNPNEKPLVRWRSHGNLLFSNWLNYYVYQETPYVL</sequence>
<organism>
    <name type="scientific">Bacillus cereus (strain AH820)</name>
    <dbReference type="NCBI Taxonomy" id="405535"/>
    <lineage>
        <taxon>Bacteria</taxon>
        <taxon>Bacillati</taxon>
        <taxon>Bacillota</taxon>
        <taxon>Bacilli</taxon>
        <taxon>Bacillales</taxon>
        <taxon>Bacillaceae</taxon>
        <taxon>Bacillus</taxon>
        <taxon>Bacillus cereus group</taxon>
    </lineage>
</organism>
<dbReference type="EC" id="2.3.1.31" evidence="1"/>
<dbReference type="EMBL" id="CP001283">
    <property type="protein sequence ID" value="ACK91113.1"/>
    <property type="molecule type" value="Genomic_DNA"/>
</dbReference>
<dbReference type="SMR" id="B7JHN0"/>
<dbReference type="KEGG" id="bcu:BCAH820_5500"/>
<dbReference type="HOGENOM" id="CLU_057851_0_1_9"/>
<dbReference type="UniPathway" id="UPA00051">
    <property type="reaction ID" value="UER00074"/>
</dbReference>
<dbReference type="Proteomes" id="UP000001363">
    <property type="component" value="Chromosome"/>
</dbReference>
<dbReference type="GO" id="GO:0005737">
    <property type="term" value="C:cytoplasm"/>
    <property type="evidence" value="ECO:0007669"/>
    <property type="project" value="UniProtKB-SubCell"/>
</dbReference>
<dbReference type="GO" id="GO:0004414">
    <property type="term" value="F:homoserine O-acetyltransferase activity"/>
    <property type="evidence" value="ECO:0007669"/>
    <property type="project" value="UniProtKB-EC"/>
</dbReference>
<dbReference type="GO" id="GO:0008899">
    <property type="term" value="F:homoserine O-succinyltransferase activity"/>
    <property type="evidence" value="ECO:0007669"/>
    <property type="project" value="UniProtKB-UniRule"/>
</dbReference>
<dbReference type="GO" id="GO:0019281">
    <property type="term" value="P:L-methionine biosynthetic process from homoserine via O-succinyl-L-homoserine and cystathionine"/>
    <property type="evidence" value="ECO:0007669"/>
    <property type="project" value="InterPro"/>
</dbReference>
<dbReference type="CDD" id="cd03131">
    <property type="entry name" value="GATase1_HTS"/>
    <property type="match status" value="1"/>
</dbReference>
<dbReference type="FunFam" id="3.40.50.880:FF:000004">
    <property type="entry name" value="Homoserine O-succinyltransferase"/>
    <property type="match status" value="1"/>
</dbReference>
<dbReference type="Gene3D" id="3.40.50.880">
    <property type="match status" value="1"/>
</dbReference>
<dbReference type="HAMAP" id="MF_00295">
    <property type="entry name" value="MetA_acyltransf"/>
    <property type="match status" value="1"/>
</dbReference>
<dbReference type="InterPro" id="IPR029062">
    <property type="entry name" value="Class_I_gatase-like"/>
</dbReference>
<dbReference type="InterPro" id="IPR005697">
    <property type="entry name" value="HST_MetA"/>
</dbReference>
<dbReference type="InterPro" id="IPR033752">
    <property type="entry name" value="MetA_family"/>
</dbReference>
<dbReference type="NCBIfam" id="TIGR01001">
    <property type="entry name" value="metA"/>
    <property type="match status" value="1"/>
</dbReference>
<dbReference type="PANTHER" id="PTHR20919">
    <property type="entry name" value="HOMOSERINE O-SUCCINYLTRANSFERASE"/>
    <property type="match status" value="1"/>
</dbReference>
<dbReference type="PANTHER" id="PTHR20919:SF0">
    <property type="entry name" value="HOMOSERINE O-SUCCINYLTRANSFERASE"/>
    <property type="match status" value="1"/>
</dbReference>
<dbReference type="Pfam" id="PF04204">
    <property type="entry name" value="HTS"/>
    <property type="match status" value="1"/>
</dbReference>
<dbReference type="PIRSF" id="PIRSF000450">
    <property type="entry name" value="H_ser_succinyltr"/>
    <property type="match status" value="1"/>
</dbReference>
<dbReference type="SUPFAM" id="SSF52317">
    <property type="entry name" value="Class I glutamine amidotransferase-like"/>
    <property type="match status" value="1"/>
</dbReference>
<name>METAA_BACC0</name>
<reference key="1">
    <citation type="submission" date="2008-10" db="EMBL/GenBank/DDBJ databases">
        <title>Genome sequence of Bacillus cereus AH820.</title>
        <authorList>
            <person name="Dodson R.J."/>
            <person name="Durkin A.S."/>
            <person name="Rosovitz M.J."/>
            <person name="Rasko D.A."/>
            <person name="Hoffmaster A."/>
            <person name="Ravel J."/>
            <person name="Sutton G."/>
        </authorList>
    </citation>
    <scope>NUCLEOTIDE SEQUENCE [LARGE SCALE GENOMIC DNA]</scope>
    <source>
        <strain>AH820</strain>
    </source>
</reference>
<feature type="chain" id="PRO_1000119444" description="Homoserine O-acetyltransferase">
    <location>
        <begin position="1"/>
        <end position="301"/>
    </location>
</feature>
<feature type="active site" description="Acyl-thioester intermediate" evidence="1">
    <location>
        <position position="142"/>
    </location>
</feature>
<feature type="active site" description="Proton acceptor" evidence="1">
    <location>
        <position position="235"/>
    </location>
</feature>
<feature type="active site" evidence="1">
    <location>
        <position position="237"/>
    </location>
</feature>
<feature type="binding site" evidence="1">
    <location>
        <position position="163"/>
    </location>
    <ligand>
        <name>substrate</name>
    </ligand>
</feature>
<feature type="binding site" evidence="1">
    <location>
        <position position="192"/>
    </location>
    <ligand>
        <name>substrate</name>
    </ligand>
</feature>
<feature type="binding site" evidence="1">
    <location>
        <position position="249"/>
    </location>
    <ligand>
        <name>substrate</name>
    </ligand>
</feature>
<feature type="site" description="Important for acyl-CoA specificity" evidence="1">
    <location>
        <position position="111"/>
    </location>
</feature>
<feature type="site" description="Important for substrate specificity" evidence="1">
    <location>
        <position position="192"/>
    </location>
</feature>
<accession>B7JHN0</accession>
<keyword id="KW-0012">Acyltransferase</keyword>
<keyword id="KW-0028">Amino-acid biosynthesis</keyword>
<keyword id="KW-0963">Cytoplasm</keyword>
<keyword id="KW-0486">Methionine biosynthesis</keyword>
<keyword id="KW-0808">Transferase</keyword>
<evidence type="ECO:0000255" key="1">
    <source>
        <dbReference type="HAMAP-Rule" id="MF_00295"/>
    </source>
</evidence>
<proteinExistence type="inferred from homology"/>